<feature type="chain" id="PRO_0000441890" description="2-hydroxy-1,4-benzoquinone reductase">
    <location>
        <begin position="1"/>
        <end position="183"/>
    </location>
</feature>
<feature type="binding site" evidence="1">
    <location>
        <begin position="11"/>
        <end position="18"/>
    </location>
    <ligand>
        <name>FMN</name>
        <dbReference type="ChEBI" id="CHEBI:58210"/>
    </ligand>
</feature>
<feature type="binding site" evidence="1">
    <location>
        <begin position="77"/>
        <end position="80"/>
    </location>
    <ligand>
        <name>FMN</name>
        <dbReference type="ChEBI" id="CHEBI:58210"/>
    </ligand>
</feature>
<feature type="binding site" evidence="1">
    <location>
        <position position="113"/>
    </location>
    <ligand>
        <name>FMN</name>
        <dbReference type="ChEBI" id="CHEBI:58210"/>
    </ligand>
</feature>
<evidence type="ECO:0000250" key="1">
    <source>
        <dbReference type="UniProtKB" id="P0AGE6"/>
    </source>
</evidence>
<evidence type="ECO:0000269" key="2">
    <source>
    </source>
</evidence>
<evidence type="ECO:0000303" key="3">
    <source>
    </source>
</evidence>
<evidence type="ECO:0000305" key="4"/>
<reference key="1">
    <citation type="journal article" date="2011" name="Biodegradation">
        <title>Fe-superoxide dismutase and 2-hydroxy-1,4-benzoquinone reductase preclude the auto-oxidation step in 4-aminophenol metabolism by Burkholderia sp. strain AK-5.</title>
        <authorList>
            <person name="Takenaka S."/>
            <person name="Koshiya J."/>
            <person name="Okugawa S."/>
            <person name="Takata A."/>
            <person name="Murakami S."/>
            <person name="Aoki K."/>
        </authorList>
    </citation>
    <scope>NUCLEOTIDE SEQUENCE [GENOMIC DNA]</scope>
    <scope>PARTIAL PROTEIN SEQUENCE</scope>
    <scope>FUNCTION</scope>
    <scope>CATALYTIC ACTIVITY</scope>
    <scope>BIOPHYSICOCHEMICAL PROPERTIES</scope>
    <scope>SUBUNIT</scope>
    <source>
        <strain>AK-5</strain>
    </source>
</reference>
<protein>
    <recommendedName>
        <fullName evidence="4">2-hydroxy-1,4-benzoquinone reductase</fullName>
        <ecNumber evidence="2">1.6.5.7</ecNumber>
    </recommendedName>
    <alternativeName>
        <fullName evidence="3">Benzoquinone reductase</fullName>
    </alternativeName>
    <alternativeName>
        <fullName evidence="4">Hydroxybenzoquinone reductase</fullName>
    </alternativeName>
</protein>
<name>HBQR_BURSP</name>
<keyword id="KW-0903">Direct protein sequencing</keyword>
<keyword id="KW-0285">Flavoprotein</keyword>
<keyword id="KW-0288">FMN</keyword>
<keyword id="KW-0520">NAD</keyword>
<keyword id="KW-0560">Oxidoreductase</keyword>
<accession>D3KVM6</accession>
<proteinExistence type="evidence at protein level"/>
<dbReference type="EC" id="1.6.5.7" evidence="2"/>
<dbReference type="EMBL" id="AB518003">
    <property type="protein sequence ID" value="BAI77485.1"/>
    <property type="molecule type" value="Genomic_DNA"/>
</dbReference>
<dbReference type="SMR" id="D3KVM6"/>
<dbReference type="BioCyc" id="MetaCyc:MONOMER-17535"/>
<dbReference type="GO" id="GO:0005829">
    <property type="term" value="C:cytosol"/>
    <property type="evidence" value="ECO:0007669"/>
    <property type="project" value="TreeGrafter"/>
</dbReference>
<dbReference type="GO" id="GO:0050625">
    <property type="term" value="F:2-hydroxy-1,4-benzoquinone reductase (NADH) activity"/>
    <property type="evidence" value="ECO:0007669"/>
    <property type="project" value="UniProtKB-EC"/>
</dbReference>
<dbReference type="GO" id="GO:0010181">
    <property type="term" value="F:FMN binding"/>
    <property type="evidence" value="ECO:0007669"/>
    <property type="project" value="TreeGrafter"/>
</dbReference>
<dbReference type="Gene3D" id="3.40.50.360">
    <property type="match status" value="1"/>
</dbReference>
<dbReference type="InterPro" id="IPR029039">
    <property type="entry name" value="Flavoprotein-like_sf"/>
</dbReference>
<dbReference type="InterPro" id="IPR005025">
    <property type="entry name" value="FMN_Rdtase-like_dom"/>
</dbReference>
<dbReference type="InterPro" id="IPR050712">
    <property type="entry name" value="NAD(P)H-dep_reductase"/>
</dbReference>
<dbReference type="PANTHER" id="PTHR30543">
    <property type="entry name" value="CHROMATE REDUCTASE"/>
    <property type="match status" value="1"/>
</dbReference>
<dbReference type="PANTHER" id="PTHR30543:SF21">
    <property type="entry name" value="NAD(P)H-DEPENDENT FMN REDUCTASE LOT6"/>
    <property type="match status" value="1"/>
</dbReference>
<dbReference type="Pfam" id="PF03358">
    <property type="entry name" value="FMN_red"/>
    <property type="match status" value="1"/>
</dbReference>
<dbReference type="SUPFAM" id="SSF52218">
    <property type="entry name" value="Flavoproteins"/>
    <property type="match status" value="1"/>
</dbReference>
<sequence>MALKIAVVVGSLRRDSFNKQLAHALASLAPSDFSFDFVDIGGLPLYSQDYDSDFPEVARAFKQQIADADGLLIVTPEYNRSMPGVLKNALDWASRPWGQSVWGGKPGAIIGTSVGAIGTAIAQSHLRGVCAYLDIVLMNQPEMYIKHDESRIDANGNIVSEDTRKYLQTFMDKYAAWVRDRRV</sequence>
<comment type="function">
    <text evidence="2">Involved in the metabolism of 4-aminophenol. Catalyzes the reduction of the auto-oxidation product 2-hydroxy-1,4-benzoquinone back to hydroxyquinol. Has a broad substrate specificity toward benzoquinones, converting them to the corresponding 1,4-benzenediols.</text>
</comment>
<comment type="catalytic activity">
    <reaction evidence="2">
        <text>2-hydroxy-1,4-benzoquinone + NADH + 2 H(+) = benzene-1,2,4-triol + NAD(+)</text>
        <dbReference type="Rhea" id="RHEA:12428"/>
        <dbReference type="ChEBI" id="CHEBI:15378"/>
        <dbReference type="ChEBI" id="CHEBI:16971"/>
        <dbReference type="ChEBI" id="CHEBI:57540"/>
        <dbReference type="ChEBI" id="CHEBI:57945"/>
        <dbReference type="ChEBI" id="CHEBI:58474"/>
        <dbReference type="EC" id="1.6.5.7"/>
    </reaction>
</comment>
<comment type="cofactor">
    <cofactor evidence="1">
        <name>FMN</name>
        <dbReference type="ChEBI" id="CHEBI:58210"/>
    </cofactor>
    <text evidence="1">Binds 1 FMN per subunit.</text>
</comment>
<comment type="biophysicochemical properties">
    <kinetics>
        <KM evidence="2">0.12 mM for 2-hydroxy-1,4-benzoquinone</KM>
        <KM evidence="2">0.031 mM for 2-methoxy-1,4-benzoquinone</KM>
        <KM evidence="2">0.048 mM for 2-methyl-1,4-benzoquinone</KM>
        <KM evidence="2">0.035 mM for 1,4-benzoquinone</KM>
        <Vmax evidence="2">0.1 umol/min/mg enzyme with 2-hydroxy-1,4-benzoquinone as substrate</Vmax>
        <Vmax evidence="2">0.56 umol/min/mg enzyme with 2-methoxy-1,4-benzoquinone as substrate</Vmax>
        <Vmax evidence="2">0.79 umol/min/mg enzyme with 2-methyl-1,4-benzoquinone as substrate</Vmax>
        <Vmax evidence="2">0.83 umol/min/mg enzyme with 1,4-benzoquinone as substrate</Vmax>
    </kinetics>
    <phDependence>
        <text evidence="2">Optimum pH is 5.0.</text>
    </phDependence>
</comment>
<comment type="subunit">
    <text evidence="2">Homotetramer.</text>
</comment>
<comment type="similarity">
    <text evidence="4">Belongs to the SsuE family.</text>
</comment>
<organism>
    <name type="scientific">Burkholderia sp</name>
    <dbReference type="NCBI Taxonomy" id="36773"/>
    <lineage>
        <taxon>Bacteria</taxon>
        <taxon>Pseudomonadati</taxon>
        <taxon>Pseudomonadota</taxon>
        <taxon>Betaproteobacteria</taxon>
        <taxon>Burkholderiales</taxon>
        <taxon>Burkholderiaceae</taxon>
        <taxon>Burkholderia</taxon>
    </lineage>
</organism>